<keyword id="KW-0066">ATP synthesis</keyword>
<keyword id="KW-0138">CF(0)</keyword>
<keyword id="KW-0150">Chloroplast</keyword>
<keyword id="KW-0375">Hydrogen ion transport</keyword>
<keyword id="KW-0406">Ion transport</keyword>
<keyword id="KW-0472">Membrane</keyword>
<keyword id="KW-0934">Plastid</keyword>
<keyword id="KW-0793">Thylakoid</keyword>
<keyword id="KW-0812">Transmembrane</keyword>
<keyword id="KW-1133">Transmembrane helix</keyword>
<keyword id="KW-0813">Transport</keyword>
<comment type="function">
    <text evidence="1">Key component of the proton channel; it plays a direct role in the translocation of protons across the membrane.</text>
</comment>
<comment type="subunit">
    <text evidence="1">F-type ATPases have 2 components, CF(1) - the catalytic core - and CF(0) - the membrane proton channel. CF(1) has five subunits: alpha(3), beta(3), gamma(1), delta(1), epsilon(1). CF(0) has four main subunits: a, b, b' and c.</text>
</comment>
<comment type="subcellular location">
    <subcellularLocation>
        <location evidence="1">Plastid</location>
        <location evidence="1">Chloroplast thylakoid membrane</location>
        <topology evidence="1">Multi-pass membrane protein</topology>
    </subcellularLocation>
</comment>
<comment type="similarity">
    <text evidence="1">Belongs to the ATPase A chain family.</text>
</comment>
<name>ATPI_BARVE</name>
<protein>
    <recommendedName>
        <fullName evidence="1">ATP synthase subunit a, chloroplastic</fullName>
    </recommendedName>
    <alternativeName>
        <fullName evidence="1">ATP synthase F0 sector subunit a</fullName>
    </alternativeName>
    <alternativeName>
        <fullName evidence="1">F-ATPase subunit IV</fullName>
    </alternativeName>
</protein>
<reference key="1">
    <citation type="submission" date="2007-03" db="EMBL/GenBank/DDBJ databases">
        <title>Sequencing analysis of Barbarea verna chloroplast DNA.</title>
        <authorList>
            <person name="Hosouchi T."/>
            <person name="Tsuruoka H."/>
            <person name="Kotani H."/>
        </authorList>
    </citation>
    <scope>NUCLEOTIDE SEQUENCE [LARGE SCALE GENOMIC DNA]</scope>
</reference>
<geneLocation type="chloroplast"/>
<accession>A4QK93</accession>
<dbReference type="EMBL" id="AP009370">
    <property type="protein sequence ID" value="BAF50098.1"/>
    <property type="molecule type" value="Genomic_DNA"/>
</dbReference>
<dbReference type="RefSeq" id="YP_001123274.1">
    <property type="nucleotide sequence ID" value="NC_009269.1"/>
</dbReference>
<dbReference type="SMR" id="A4QK93"/>
<dbReference type="GeneID" id="4961930"/>
<dbReference type="GO" id="GO:0009535">
    <property type="term" value="C:chloroplast thylakoid membrane"/>
    <property type="evidence" value="ECO:0007669"/>
    <property type="project" value="UniProtKB-SubCell"/>
</dbReference>
<dbReference type="GO" id="GO:0005886">
    <property type="term" value="C:plasma membrane"/>
    <property type="evidence" value="ECO:0007669"/>
    <property type="project" value="UniProtKB-UniRule"/>
</dbReference>
<dbReference type="GO" id="GO:0045259">
    <property type="term" value="C:proton-transporting ATP synthase complex"/>
    <property type="evidence" value="ECO:0007669"/>
    <property type="project" value="UniProtKB-KW"/>
</dbReference>
<dbReference type="GO" id="GO:0046933">
    <property type="term" value="F:proton-transporting ATP synthase activity, rotational mechanism"/>
    <property type="evidence" value="ECO:0007669"/>
    <property type="project" value="UniProtKB-UniRule"/>
</dbReference>
<dbReference type="CDD" id="cd00310">
    <property type="entry name" value="ATP-synt_Fo_a_6"/>
    <property type="match status" value="1"/>
</dbReference>
<dbReference type="FunFam" id="1.20.120.220:FF:000001">
    <property type="entry name" value="ATP synthase subunit a, chloroplastic"/>
    <property type="match status" value="1"/>
</dbReference>
<dbReference type="Gene3D" id="1.20.120.220">
    <property type="entry name" value="ATP synthase, F0 complex, subunit A"/>
    <property type="match status" value="1"/>
</dbReference>
<dbReference type="HAMAP" id="MF_01393">
    <property type="entry name" value="ATP_synth_a_bact"/>
    <property type="match status" value="1"/>
</dbReference>
<dbReference type="InterPro" id="IPR045082">
    <property type="entry name" value="ATP_syn_F0_a_bact/chloroplast"/>
</dbReference>
<dbReference type="InterPro" id="IPR000568">
    <property type="entry name" value="ATP_synth_F0_asu"/>
</dbReference>
<dbReference type="InterPro" id="IPR023011">
    <property type="entry name" value="ATP_synth_F0_asu_AS"/>
</dbReference>
<dbReference type="InterPro" id="IPR035908">
    <property type="entry name" value="F0_ATP_A_sf"/>
</dbReference>
<dbReference type="NCBIfam" id="TIGR01131">
    <property type="entry name" value="ATP_synt_6_or_A"/>
    <property type="match status" value="1"/>
</dbReference>
<dbReference type="PANTHER" id="PTHR42823">
    <property type="entry name" value="ATP SYNTHASE SUBUNIT A, CHLOROPLASTIC"/>
    <property type="match status" value="1"/>
</dbReference>
<dbReference type="PANTHER" id="PTHR42823:SF3">
    <property type="entry name" value="ATP SYNTHASE SUBUNIT A, CHLOROPLASTIC"/>
    <property type="match status" value="1"/>
</dbReference>
<dbReference type="Pfam" id="PF00119">
    <property type="entry name" value="ATP-synt_A"/>
    <property type="match status" value="1"/>
</dbReference>
<dbReference type="PRINTS" id="PR00123">
    <property type="entry name" value="ATPASEA"/>
</dbReference>
<dbReference type="SUPFAM" id="SSF81336">
    <property type="entry name" value="F1F0 ATP synthase subunit A"/>
    <property type="match status" value="1"/>
</dbReference>
<dbReference type="PROSITE" id="PS00449">
    <property type="entry name" value="ATPASE_A"/>
    <property type="match status" value="1"/>
</dbReference>
<proteinExistence type="inferred from homology"/>
<sequence length="249" mass="27350">MNVLSCSINTLIKEGLYEISGVEVGQHFYWQIGGFQVHAQVLITSWVVIAILLGSAVIAIRNPQTIPTDGQNFFEFVLEFIRDVSQTQIGEEYGPWVPFIGTLFLFIFVSNWSGALLPWKIIQLPQGELAAPTNDINTTVALALLTSVAYFYAGLSKKGLGYFSKYIQPTPILLPINILEDFTKPLSLSFRLFGNILADELVVVVLVSLVPLVVPIPVMFLGLFTSGIQALIFATLAAAYIGESMEGHH</sequence>
<feature type="chain" id="PRO_0000362531" description="ATP synthase subunit a, chloroplastic">
    <location>
        <begin position="1"/>
        <end position="249"/>
    </location>
</feature>
<feature type="transmembrane region" description="Helical" evidence="1">
    <location>
        <begin position="40"/>
        <end position="60"/>
    </location>
</feature>
<feature type="transmembrane region" description="Helical" evidence="1">
    <location>
        <begin position="97"/>
        <end position="117"/>
    </location>
</feature>
<feature type="transmembrane region" description="Helical" evidence="1">
    <location>
        <begin position="136"/>
        <end position="156"/>
    </location>
</feature>
<feature type="transmembrane region" description="Helical" evidence="1">
    <location>
        <begin position="201"/>
        <end position="221"/>
    </location>
</feature>
<feature type="transmembrane region" description="Helical" evidence="1">
    <location>
        <begin position="222"/>
        <end position="242"/>
    </location>
</feature>
<organism>
    <name type="scientific">Barbarea verna</name>
    <name type="common">Land cress</name>
    <name type="synonym">Erysimum vernum</name>
    <dbReference type="NCBI Taxonomy" id="50458"/>
    <lineage>
        <taxon>Eukaryota</taxon>
        <taxon>Viridiplantae</taxon>
        <taxon>Streptophyta</taxon>
        <taxon>Embryophyta</taxon>
        <taxon>Tracheophyta</taxon>
        <taxon>Spermatophyta</taxon>
        <taxon>Magnoliopsida</taxon>
        <taxon>eudicotyledons</taxon>
        <taxon>Gunneridae</taxon>
        <taxon>Pentapetalae</taxon>
        <taxon>rosids</taxon>
        <taxon>malvids</taxon>
        <taxon>Brassicales</taxon>
        <taxon>Brassicaceae</taxon>
        <taxon>Cardamineae</taxon>
        <taxon>Barbarea</taxon>
    </lineage>
</organism>
<gene>
    <name evidence="1" type="primary">atpI</name>
</gene>
<evidence type="ECO:0000255" key="1">
    <source>
        <dbReference type="HAMAP-Rule" id="MF_01393"/>
    </source>
</evidence>